<accession>B8G014</accession>
<feature type="chain" id="PRO_1000185072" description="UPF0316 protein Dhaf_3052">
    <location>
        <begin position="1"/>
        <end position="174"/>
    </location>
</feature>
<feature type="transmembrane region" description="Helical" evidence="1">
    <location>
        <begin position="4"/>
        <end position="24"/>
    </location>
</feature>
<feature type="transmembrane region" description="Helical" evidence="1">
    <location>
        <begin position="35"/>
        <end position="55"/>
    </location>
</feature>
<feature type="transmembrane region" description="Helical" evidence="1">
    <location>
        <begin position="59"/>
        <end position="79"/>
    </location>
</feature>
<name>Y3052_DESHD</name>
<dbReference type="EMBL" id="CP001336">
    <property type="protein sequence ID" value="ACL21075.1"/>
    <property type="molecule type" value="Genomic_DNA"/>
</dbReference>
<dbReference type="RefSeq" id="WP_011459927.1">
    <property type="nucleotide sequence ID" value="NC_011830.1"/>
</dbReference>
<dbReference type="SMR" id="B8G014"/>
<dbReference type="KEGG" id="dhd:Dhaf_3052"/>
<dbReference type="HOGENOM" id="CLU_106166_1_0_9"/>
<dbReference type="Proteomes" id="UP000007726">
    <property type="component" value="Chromosome"/>
</dbReference>
<dbReference type="GO" id="GO:0005886">
    <property type="term" value="C:plasma membrane"/>
    <property type="evidence" value="ECO:0007669"/>
    <property type="project" value="UniProtKB-SubCell"/>
</dbReference>
<dbReference type="CDD" id="cd16381">
    <property type="entry name" value="YitT_C_like_1"/>
    <property type="match status" value="1"/>
</dbReference>
<dbReference type="HAMAP" id="MF_01515">
    <property type="entry name" value="UPF0316"/>
    <property type="match status" value="1"/>
</dbReference>
<dbReference type="InterPro" id="IPR019264">
    <property type="entry name" value="DUF2179"/>
</dbReference>
<dbReference type="InterPro" id="IPR044035">
    <property type="entry name" value="DUF5698"/>
</dbReference>
<dbReference type="InterPro" id="IPR022930">
    <property type="entry name" value="UPF0316"/>
</dbReference>
<dbReference type="NCBIfam" id="NF003194">
    <property type="entry name" value="PRK04164.1-5"/>
    <property type="match status" value="1"/>
</dbReference>
<dbReference type="PANTHER" id="PTHR40060">
    <property type="entry name" value="UPF0316 PROTEIN YEBE"/>
    <property type="match status" value="1"/>
</dbReference>
<dbReference type="PANTHER" id="PTHR40060:SF1">
    <property type="entry name" value="UPF0316 PROTEIN YEBE"/>
    <property type="match status" value="1"/>
</dbReference>
<dbReference type="Pfam" id="PF10035">
    <property type="entry name" value="DUF2179"/>
    <property type="match status" value="1"/>
</dbReference>
<dbReference type="Pfam" id="PF18955">
    <property type="entry name" value="DUF5698"/>
    <property type="match status" value="1"/>
</dbReference>
<comment type="subcellular location">
    <subcellularLocation>
        <location evidence="1">Cell membrane</location>
        <topology evidence="1">Multi-pass membrane protein</topology>
    </subcellularLocation>
</comment>
<comment type="similarity">
    <text evidence="1">Belongs to the UPF0316 family.</text>
</comment>
<reference key="1">
    <citation type="journal article" date="2012" name="BMC Microbiol.">
        <title>Genome sequence of Desulfitobacterium hafniense DCB-2, a Gram-positive anaerobe capable of dehalogenation and metal reduction.</title>
        <authorList>
            <person name="Kim S.H."/>
            <person name="Harzman C."/>
            <person name="Davis J.K."/>
            <person name="Hutcheson R."/>
            <person name="Broderick J.B."/>
            <person name="Marsh T.L."/>
            <person name="Tiedje J.M."/>
        </authorList>
    </citation>
    <scope>NUCLEOTIDE SEQUENCE [LARGE SCALE GENOMIC DNA]</scope>
    <source>
        <strain>DSM 10664 / DCB-2</strain>
    </source>
</reference>
<gene>
    <name type="ordered locus">Dhaf_3052</name>
</gene>
<proteinExistence type="inferred from homology"/>
<organism>
    <name type="scientific">Desulfitobacterium hafniense (strain DSM 10664 / DCB-2)</name>
    <dbReference type="NCBI Taxonomy" id="272564"/>
    <lineage>
        <taxon>Bacteria</taxon>
        <taxon>Bacillati</taxon>
        <taxon>Bacillota</taxon>
        <taxon>Clostridia</taxon>
        <taxon>Eubacteriales</taxon>
        <taxon>Desulfitobacteriaceae</taxon>
        <taxon>Desulfitobacterium</taxon>
    </lineage>
</organism>
<sequence length="174" mass="19624">MGSILQFVLIIITINITYVTLTTIRFILMIKGMRVYASLLSVLEVFIYIMGLSIILDNLDSYWNIAAYCCGYGVGVYLGSRIEERLALGYIMAQVIVECEYQGLAGELRDAGFGVTSWLGEGKTGPRMVMMVLAKRNRQKELLNRIDSLCSNAFVIFEEPKNFRGGFWAKKVLH</sequence>
<keyword id="KW-1003">Cell membrane</keyword>
<keyword id="KW-0472">Membrane</keyword>
<keyword id="KW-0812">Transmembrane</keyword>
<keyword id="KW-1133">Transmembrane helix</keyword>
<evidence type="ECO:0000255" key="1">
    <source>
        <dbReference type="HAMAP-Rule" id="MF_01515"/>
    </source>
</evidence>
<protein>
    <recommendedName>
        <fullName evidence="1">UPF0316 protein Dhaf_3052</fullName>
    </recommendedName>
</protein>